<reference key="1">
    <citation type="submission" date="2006-12" db="EMBL/GenBank/DDBJ databases">
        <title>Complete sequence of Chlorobium phaeobacteroides DSM 266.</title>
        <authorList>
            <consortium name="US DOE Joint Genome Institute"/>
            <person name="Copeland A."/>
            <person name="Lucas S."/>
            <person name="Lapidus A."/>
            <person name="Barry K."/>
            <person name="Detter J.C."/>
            <person name="Glavina del Rio T."/>
            <person name="Hammon N."/>
            <person name="Israni S."/>
            <person name="Pitluck S."/>
            <person name="Goltsman E."/>
            <person name="Schmutz J."/>
            <person name="Larimer F."/>
            <person name="Land M."/>
            <person name="Hauser L."/>
            <person name="Mikhailova N."/>
            <person name="Li T."/>
            <person name="Overmann J."/>
            <person name="Bryant D.A."/>
            <person name="Richardson P."/>
        </authorList>
    </citation>
    <scope>NUCLEOTIDE SEQUENCE [LARGE SCALE GENOMIC DNA]</scope>
    <source>
        <strain>DSM 266 / SMG 266 / 2430</strain>
    </source>
</reference>
<gene>
    <name evidence="1" type="primary">gcvPB</name>
    <name type="ordered locus">Cpha266_2496</name>
</gene>
<protein>
    <recommendedName>
        <fullName evidence="1">Probable glycine dehydrogenase (decarboxylating) subunit 2</fullName>
        <ecNumber evidence="1">1.4.4.2</ecNumber>
    </recommendedName>
    <alternativeName>
        <fullName evidence="1">Glycine cleavage system P-protein subunit 2</fullName>
    </alternativeName>
    <alternativeName>
        <fullName evidence="1">Glycine decarboxylase subunit 2</fullName>
    </alternativeName>
    <alternativeName>
        <fullName evidence="1">Glycine dehydrogenase (aminomethyl-transferring) subunit 2</fullName>
    </alternativeName>
</protein>
<keyword id="KW-0560">Oxidoreductase</keyword>
<keyword id="KW-0663">Pyridoxal phosphate</keyword>
<keyword id="KW-1185">Reference proteome</keyword>
<evidence type="ECO:0000255" key="1">
    <source>
        <dbReference type="HAMAP-Rule" id="MF_00713"/>
    </source>
</evidence>
<proteinExistence type="inferred from homology"/>
<accession>A1BJA7</accession>
<feature type="chain" id="PRO_1000045690" description="Probable glycine dehydrogenase (decarboxylating) subunit 2">
    <location>
        <begin position="1"/>
        <end position="486"/>
    </location>
</feature>
<feature type="modified residue" description="N6-(pyridoxal phosphate)lysine" evidence="1">
    <location>
        <position position="269"/>
    </location>
</feature>
<comment type="function">
    <text evidence="1">The glycine cleavage system catalyzes the degradation of glycine. The P protein binds the alpha-amino group of glycine through its pyridoxal phosphate cofactor; CO(2) is released and the remaining methylamine moiety is then transferred to the lipoamide cofactor of the H protein.</text>
</comment>
<comment type="catalytic activity">
    <reaction evidence="1">
        <text>N(6)-[(R)-lipoyl]-L-lysyl-[glycine-cleavage complex H protein] + glycine + H(+) = N(6)-[(R)-S(8)-aminomethyldihydrolipoyl]-L-lysyl-[glycine-cleavage complex H protein] + CO2</text>
        <dbReference type="Rhea" id="RHEA:24304"/>
        <dbReference type="Rhea" id="RHEA-COMP:10494"/>
        <dbReference type="Rhea" id="RHEA-COMP:10495"/>
        <dbReference type="ChEBI" id="CHEBI:15378"/>
        <dbReference type="ChEBI" id="CHEBI:16526"/>
        <dbReference type="ChEBI" id="CHEBI:57305"/>
        <dbReference type="ChEBI" id="CHEBI:83099"/>
        <dbReference type="ChEBI" id="CHEBI:83143"/>
        <dbReference type="EC" id="1.4.4.2"/>
    </reaction>
</comment>
<comment type="cofactor">
    <cofactor evidence="1">
        <name>pyridoxal 5'-phosphate</name>
        <dbReference type="ChEBI" id="CHEBI:597326"/>
    </cofactor>
</comment>
<comment type="subunit">
    <text evidence="1">The glycine cleavage system is composed of four proteins: P, T, L and H. In this organism, the P 'protein' is a heterodimer of two subunits.</text>
</comment>
<comment type="similarity">
    <text evidence="1">Belongs to the GcvP family. C-terminal subunit subfamily.</text>
</comment>
<sequence length="486" mass="53462">MREKLIFDLSRNGRKGYSLSKNDLPETSVAAVIPSKFLRTTPAELPEVPESEVVRHFIRLSNLNYHVDKNMYPLGSCTMKYNPKVNDYTCDLPGFSTLHPLQPSETTQGALRLMYELSSMLSEIAGMAAVSLQPAAGAHGELTGILLIKKYHEAQGKMRNKLLVVDSAHGTNPASAAIAGYEIISVRSNADGRTDLEDLKARLQSDVAALMLTNPNTIGLFEKDILAIERMVHENGSLLYMDGANMNALLGITRPGDMGFDVVHYNLHKTFSAPHGGGGPGSGPIGVSARLAGYLPVPVIEKEESATGTSYRLNYDRPESIGRMISFYGNFSVLVRAYTYIRMLGPEGLRRVSENAIINANYLLSLLLERYDLPYPKSVMHEFCLSGDRQKKANGVKTLDMAKRLLDYGFHAPTIYFPLIVSEALMIEPTETETKETLERFAEAMIAIADEAENNPALVKSAPETTPVKRLDEAQASRQLNICCSL</sequence>
<name>GCSPB_CHLPD</name>
<dbReference type="EC" id="1.4.4.2" evidence="1"/>
<dbReference type="EMBL" id="CP000492">
    <property type="protein sequence ID" value="ABL66484.1"/>
    <property type="molecule type" value="Genomic_DNA"/>
</dbReference>
<dbReference type="RefSeq" id="WP_011746261.1">
    <property type="nucleotide sequence ID" value="NC_008639.1"/>
</dbReference>
<dbReference type="SMR" id="A1BJA7"/>
<dbReference type="STRING" id="290317.Cpha266_2496"/>
<dbReference type="KEGG" id="cph:Cpha266_2496"/>
<dbReference type="eggNOG" id="COG1003">
    <property type="taxonomic scope" value="Bacteria"/>
</dbReference>
<dbReference type="HOGENOM" id="CLU_004620_5_0_10"/>
<dbReference type="OrthoDB" id="9801272at2"/>
<dbReference type="Proteomes" id="UP000008701">
    <property type="component" value="Chromosome"/>
</dbReference>
<dbReference type="GO" id="GO:0005829">
    <property type="term" value="C:cytosol"/>
    <property type="evidence" value="ECO:0007669"/>
    <property type="project" value="TreeGrafter"/>
</dbReference>
<dbReference type="GO" id="GO:0005960">
    <property type="term" value="C:glycine cleavage complex"/>
    <property type="evidence" value="ECO:0007669"/>
    <property type="project" value="TreeGrafter"/>
</dbReference>
<dbReference type="GO" id="GO:0016594">
    <property type="term" value="F:glycine binding"/>
    <property type="evidence" value="ECO:0007669"/>
    <property type="project" value="TreeGrafter"/>
</dbReference>
<dbReference type="GO" id="GO:0004375">
    <property type="term" value="F:glycine dehydrogenase (decarboxylating) activity"/>
    <property type="evidence" value="ECO:0007669"/>
    <property type="project" value="UniProtKB-EC"/>
</dbReference>
<dbReference type="GO" id="GO:0030170">
    <property type="term" value="F:pyridoxal phosphate binding"/>
    <property type="evidence" value="ECO:0007669"/>
    <property type="project" value="TreeGrafter"/>
</dbReference>
<dbReference type="GO" id="GO:0019464">
    <property type="term" value="P:glycine decarboxylation via glycine cleavage system"/>
    <property type="evidence" value="ECO:0007669"/>
    <property type="project" value="UniProtKB-UniRule"/>
</dbReference>
<dbReference type="CDD" id="cd00613">
    <property type="entry name" value="GDC-P"/>
    <property type="match status" value="1"/>
</dbReference>
<dbReference type="FunFam" id="3.40.640.10:FF:000224">
    <property type="entry name" value="Probable glycine dehydrogenase (decarboxylating) subunit 2"/>
    <property type="match status" value="1"/>
</dbReference>
<dbReference type="FunFam" id="3.90.1150.10:FF:000014">
    <property type="entry name" value="Probable glycine dehydrogenase (decarboxylating) subunit 2"/>
    <property type="match status" value="1"/>
</dbReference>
<dbReference type="Gene3D" id="6.20.440.10">
    <property type="match status" value="1"/>
</dbReference>
<dbReference type="Gene3D" id="3.90.1150.10">
    <property type="entry name" value="Aspartate Aminotransferase, domain 1"/>
    <property type="match status" value="1"/>
</dbReference>
<dbReference type="Gene3D" id="3.40.640.10">
    <property type="entry name" value="Type I PLP-dependent aspartate aminotransferase-like (Major domain)"/>
    <property type="match status" value="1"/>
</dbReference>
<dbReference type="HAMAP" id="MF_00713">
    <property type="entry name" value="GcvPB"/>
    <property type="match status" value="1"/>
</dbReference>
<dbReference type="InterPro" id="IPR000192">
    <property type="entry name" value="Aminotrans_V_dom"/>
</dbReference>
<dbReference type="InterPro" id="IPR023012">
    <property type="entry name" value="GcvPB"/>
</dbReference>
<dbReference type="InterPro" id="IPR049316">
    <property type="entry name" value="GDC-P_C"/>
</dbReference>
<dbReference type="InterPro" id="IPR020581">
    <property type="entry name" value="GDC_P"/>
</dbReference>
<dbReference type="InterPro" id="IPR015424">
    <property type="entry name" value="PyrdxlP-dep_Trfase"/>
</dbReference>
<dbReference type="InterPro" id="IPR015421">
    <property type="entry name" value="PyrdxlP-dep_Trfase_major"/>
</dbReference>
<dbReference type="InterPro" id="IPR015422">
    <property type="entry name" value="PyrdxlP-dep_Trfase_small"/>
</dbReference>
<dbReference type="NCBIfam" id="NF003346">
    <property type="entry name" value="PRK04366.1"/>
    <property type="match status" value="1"/>
</dbReference>
<dbReference type="PANTHER" id="PTHR11773:SF1">
    <property type="entry name" value="GLYCINE DEHYDROGENASE (DECARBOXYLATING), MITOCHONDRIAL"/>
    <property type="match status" value="1"/>
</dbReference>
<dbReference type="PANTHER" id="PTHR11773">
    <property type="entry name" value="GLYCINE DEHYDROGENASE, DECARBOXYLATING"/>
    <property type="match status" value="1"/>
</dbReference>
<dbReference type="Pfam" id="PF00266">
    <property type="entry name" value="Aminotran_5"/>
    <property type="match status" value="1"/>
</dbReference>
<dbReference type="Pfam" id="PF21478">
    <property type="entry name" value="GcvP2_C"/>
    <property type="match status" value="1"/>
</dbReference>
<dbReference type="SUPFAM" id="SSF53383">
    <property type="entry name" value="PLP-dependent transferases"/>
    <property type="match status" value="1"/>
</dbReference>
<organism>
    <name type="scientific">Chlorobium phaeobacteroides (strain DSM 266 / SMG 266 / 2430)</name>
    <dbReference type="NCBI Taxonomy" id="290317"/>
    <lineage>
        <taxon>Bacteria</taxon>
        <taxon>Pseudomonadati</taxon>
        <taxon>Chlorobiota</taxon>
        <taxon>Chlorobiia</taxon>
        <taxon>Chlorobiales</taxon>
        <taxon>Chlorobiaceae</taxon>
        <taxon>Chlorobium/Pelodictyon group</taxon>
        <taxon>Chlorobium</taxon>
    </lineage>
</organism>